<protein>
    <recommendedName>
        <fullName>Chlorophyllase type 2</fullName>
        <ecNumber>3.1.1.14</ecNumber>
    </recommendedName>
    <alternativeName>
        <fullName>CaCLH2</fullName>
    </alternativeName>
    <alternativeName>
        <fullName>Chlorophyll-chlorophyllido hydrolase 2</fullName>
        <shortName>Chlase 2</shortName>
    </alternativeName>
</protein>
<dbReference type="EC" id="3.1.1.14"/>
<dbReference type="UniPathway" id="UPA00674"/>
<dbReference type="GO" id="GO:0047746">
    <property type="term" value="F:chlorophyllase activity"/>
    <property type="evidence" value="ECO:0007669"/>
    <property type="project" value="UniProtKB-EC"/>
</dbReference>
<dbReference type="GO" id="GO:0015996">
    <property type="term" value="P:chlorophyll catabolic process"/>
    <property type="evidence" value="ECO:0007669"/>
    <property type="project" value="UniProtKB-UniPathway"/>
</dbReference>
<sequence length="21" mass="2470">SEKITVFQKNFQVTENSSHFV</sequence>
<proteinExistence type="evidence at protein level"/>
<feature type="chain" id="PRO_0000090388" description="Chlorophyllase type 2">
    <location>
        <begin position="1"/>
        <end position="21" status="greater than"/>
    </location>
</feature>
<feature type="non-consecutive residues" evidence="1">
    <location>
        <begin position="14"/>
        <end position="15"/>
    </location>
</feature>
<feature type="non-terminal residue">
    <location>
        <position position="21"/>
    </location>
</feature>
<evidence type="ECO:0000305" key="1"/>
<reference key="1">
    <citation type="journal article" date="1997" name="Plant Cell Physiol.">
        <title>Purification and characterization of two isozymes of chlorophyllase from mature leaves of Chenopodium album.</title>
        <authorList>
            <person name="Tsuchiya T."/>
            <person name="Ohta H."/>
            <person name="Masuda T."/>
            <person name="Mikami B."/>
            <person name="Kita N."/>
            <person name="Shioi Y."/>
            <person name="Takamiya K."/>
        </authorList>
    </citation>
    <scope>PROTEIN SEQUENCE</scope>
    <scope>CHARACTERIZATION</scope>
</reference>
<name>CLH2_CHEAL</name>
<accession>P59678</accession>
<keyword id="KW-0881">Chlorophyll catabolism</keyword>
<keyword id="KW-0903">Direct protein sequencing</keyword>
<keyword id="KW-0378">Hydrolase</keyword>
<organism>
    <name type="scientific">Chenopodium album</name>
    <name type="common">Fat hen</name>
    <dbReference type="NCBI Taxonomy" id="3559"/>
    <lineage>
        <taxon>Eukaryota</taxon>
        <taxon>Viridiplantae</taxon>
        <taxon>Streptophyta</taxon>
        <taxon>Embryophyta</taxon>
        <taxon>Tracheophyta</taxon>
        <taxon>Spermatophyta</taxon>
        <taxon>Magnoliopsida</taxon>
        <taxon>eudicotyledons</taxon>
        <taxon>Gunneridae</taxon>
        <taxon>Pentapetalae</taxon>
        <taxon>Caryophyllales</taxon>
        <taxon>Chenopodiaceae</taxon>
        <taxon>Chenopodioideae</taxon>
        <taxon>Atripliceae</taxon>
        <taxon>Chenopodium</taxon>
    </lineage>
</organism>
<comment type="function">
    <text>Catalyzes the hydrolysis of ester bond in chlorophyll to yield chlorophyllide and phytol.</text>
</comment>
<comment type="catalytic activity">
    <reaction>
        <text>a chlorophyll + H2O = a chlorophyllide + phytol + H(+)</text>
        <dbReference type="Rhea" id="RHEA:19605"/>
        <dbReference type="ChEBI" id="CHEBI:15377"/>
        <dbReference type="ChEBI" id="CHEBI:15378"/>
        <dbReference type="ChEBI" id="CHEBI:17327"/>
        <dbReference type="ChEBI" id="CHEBI:139291"/>
        <dbReference type="ChEBI" id="CHEBI:139292"/>
        <dbReference type="EC" id="3.1.1.14"/>
    </reaction>
</comment>
<comment type="biophysicochemical properties">
    <kinetics>
        <KM>4.6 uM for chlorophyll a</KM>
        <KM>4.4 uM for chlorophyll b</KM>
    </kinetics>
    <phDependence>
        <text>Optimum pH is 6.6-8.6 for chlorophyll a hydrolysis, and 6.6-7.6 for chlorophyll b hydrolysis.</text>
    </phDependence>
</comment>
<comment type="pathway">
    <text>Porphyrin-containing compound metabolism; chlorophyll degradation.</text>
</comment>
<comment type="similarity">
    <text evidence="1">Belongs to the AB hydrolase superfamily. Lipase family.</text>
</comment>